<accession>P95871</accession>
<organism>
    <name type="scientific">Saccharolobus solfataricus (strain ATCC 35092 / DSM 1617 / JCM 11322 / P2)</name>
    <name type="common">Sulfolobus solfataricus</name>
    <dbReference type="NCBI Taxonomy" id="273057"/>
    <lineage>
        <taxon>Archaea</taxon>
        <taxon>Thermoproteota</taxon>
        <taxon>Thermoprotei</taxon>
        <taxon>Sulfolobales</taxon>
        <taxon>Sulfolobaceae</taxon>
        <taxon>Saccharolobus</taxon>
    </lineage>
</organism>
<name>TRI_SACS2</name>
<reference key="1">
    <citation type="journal article" date="1996" name="Mol. Microbiol.">
        <title>Organizational characteristics and information content of an archaeal genome: 156 kb of sequence from Sulfolobus solfataricus P2.</title>
        <authorList>
            <person name="Sensen C.W."/>
            <person name="Klenk H.-P."/>
            <person name="Singh R.K."/>
            <person name="Allard G."/>
            <person name="Chan C.C.-Y."/>
            <person name="Liu Q.Y."/>
            <person name="Penny S.L."/>
            <person name="Young F."/>
            <person name="Schenk M.E."/>
            <person name="Gaasterland T."/>
            <person name="Doolittle W.F."/>
            <person name="Ragan M.A."/>
            <person name="Charlebois R.L."/>
        </authorList>
    </citation>
    <scope>NUCLEOTIDE SEQUENCE [GENOMIC DNA]</scope>
    <source>
        <strain>ATCC 35092 / DSM 1617 / JCM 11322 / P2</strain>
    </source>
</reference>
<reference key="2">
    <citation type="journal article" date="2001" name="Proc. Natl. Acad. Sci. U.S.A.">
        <title>The complete genome of the crenarchaeon Sulfolobus solfataricus P2.</title>
        <authorList>
            <person name="She Q."/>
            <person name="Singh R.K."/>
            <person name="Confalonieri F."/>
            <person name="Zivanovic Y."/>
            <person name="Allard G."/>
            <person name="Awayez M.J."/>
            <person name="Chan-Weiher C.C.-Y."/>
            <person name="Clausen I.G."/>
            <person name="Curtis B.A."/>
            <person name="De Moors A."/>
            <person name="Erauso G."/>
            <person name="Fletcher C."/>
            <person name="Gordon P.M.K."/>
            <person name="Heikamp-de Jong I."/>
            <person name="Jeffries A.C."/>
            <person name="Kozera C.J."/>
            <person name="Medina N."/>
            <person name="Peng X."/>
            <person name="Thi-Ngoc H.P."/>
            <person name="Redder P."/>
            <person name="Schenk M.E."/>
            <person name="Theriault C."/>
            <person name="Tolstrup N."/>
            <person name="Charlebois R.L."/>
            <person name="Doolittle W.F."/>
            <person name="Duguet M."/>
            <person name="Gaasterland T."/>
            <person name="Garrett R.A."/>
            <person name="Ragan M.A."/>
            <person name="Sensen C.W."/>
            <person name="Van der Oost J."/>
        </authorList>
    </citation>
    <scope>NUCLEOTIDE SEQUENCE [LARGE SCALE GENOMIC DNA]</scope>
    <source>
        <strain>ATCC 35092 / DSM 1617 / JCM 11322 / P2</strain>
    </source>
</reference>
<sequence length="1068" mass="123115">MLSLLIIRATQFAITSFRCESTIYRYCAKYYYIGFHNHKDLIGVKEFCGKHYILKIIHYHMKAYYMYPDIRGDLISFTSDDDVWLLSLKDMKPLRITSGLGVSTRPKISPSGRKVAFSVIWLKSGKQGGDIYVVEDGQARRVTYFGSRNSRVAGWISEDEIIVITDFHTPFIQWTEAYKVNVNNGKTEKLPFGMLSNIVIKDDIIVIARGYQDLPNWKGYKGGTKGELWISSDGGKTFEKFVSLDGNVSWPMIVRERVYFLSDHEGVGNLYSVDLKGKDLRRHTNFTDYYCRNASSDGKRIVFQNAGDIYLYDPEKDSLTKLDINLPTDRKKKQPKFVNVMEYMNEAVVNGNYIALVSRGKVFLMRPWDGPSVQLGKKQGVKYRQIQVLPNGDVIGVNDEDKLVILGKDGSEKVINKDFSRIERVKVSPDGKKVLLSNNKLELWVYEIDNDNARLIDKSEYDLILEFDWHPNAEWFAYAFPEGYYTQSIKLAHIDGKVVRITTPYGYDFSPSFDPDGRYLYFLAARHLDPTNDKVIFNLSFQRVVKPYLVVLGNYYSPFNQPLDEANSNDKNVIIEGIEDRVVPFPIEEENYVQIAGAKNNKIFLFSYPIRGLRSQTGDVFGRLEVYDLENKAKELYADNVSSFSLSSDKSKILLILKDSLRLFDVNVKPDFNSTGRKGGVIDLSRVKVYVEPEKEWRQMLRETWKLMKQNYWNEERLKNWDSILPKYERLLDRISTRFELSDVIQEMQGETRTSHSYETAYDYDTPEPLSVGGLGAEFEYDESNKCYKITKIYVGDSTNENERSPLRDPGVQLNVGDCIKNIDGEDANGNIYSHLINKDQVILDVITADGKNKRVTVKVLKDERFLIYRYWVEKNREYVHEKSKGRLGYIHIPDMMYQGFAEFYRLFMSEFHREGLVVDVRFNRGGFVSGLLLEKLLLKRVGYDYPRNGKPIPMPYFSSPKVLVGITNEHAGSDGDIFSFLFKKYKLGVLIGRRTWGGVVGIRPRYRLVDKTYISQPEFAVNFEDVGFGIENYGVDPDIVVEIKPDDYVNNRDTQLDTAIELALKQL</sequence>
<keyword id="KW-0963">Cytoplasm</keyword>
<keyword id="KW-0378">Hydrolase</keyword>
<keyword id="KW-0645">Protease</keyword>
<keyword id="KW-1185">Reference proteome</keyword>
<keyword id="KW-0720">Serine protease</keyword>
<evidence type="ECO:0000250" key="1"/>
<evidence type="ECO:0000250" key="2">
    <source>
        <dbReference type="UniProtKB" id="P96086"/>
    </source>
</evidence>
<evidence type="ECO:0000305" key="3"/>
<comment type="function">
    <text evidence="1">Degrades oligopeptides in a sequential manner.</text>
</comment>
<comment type="subcellular location">
    <subcellularLocation>
        <location evidence="1">Cytoplasm</location>
    </subcellularLocation>
</comment>
<comment type="similarity">
    <text evidence="3">Belongs to the peptidase S41B family.</text>
</comment>
<proteinExistence type="inferred from homology"/>
<gene>
    <name type="primary">tri</name>
    <name type="ordered locus">SSO2098</name>
    <name type="ORF">C06024</name>
    <name type="ORF">C06_007</name>
</gene>
<feature type="chain" id="PRO_0000207194" description="Tricorn protease homolog">
    <location>
        <begin position="1"/>
        <end position="1068"/>
    </location>
</feature>
<feature type="region of interest" description="Six-bladed beta propeller" evidence="1">
    <location>
        <begin position="61"/>
        <end position="326"/>
    </location>
</feature>
<feature type="region of interest" description="Seven-bladed beta propeller" evidence="1">
    <location>
        <begin position="338"/>
        <end position="686"/>
    </location>
</feature>
<feature type="region of interest" description="C-1" evidence="1">
    <location>
        <begin position="692"/>
        <end position="762"/>
    </location>
</feature>
<feature type="region of interest" description="PDZ-like">
    <location>
        <begin position="771"/>
        <end position="864"/>
    </location>
</feature>
<feature type="region of interest" description="C-2" evidence="1">
    <location>
        <begin position="865"/>
        <end position="1068"/>
    </location>
</feature>
<feature type="active site" description="Charge relay system" evidence="1">
    <location>
        <position position="756"/>
    </location>
</feature>
<feature type="active site" description="Nucleophile" evidence="2">
    <location>
        <position position="974"/>
    </location>
</feature>
<feature type="active site" description="Charge relay system" evidence="2">
    <location>
        <position position="1032"/>
    </location>
</feature>
<feature type="binding site" evidence="2">
    <location>
        <position position="927"/>
    </location>
    <ligand>
        <name>substrate</name>
    </ligand>
</feature>
<feature type="site" description="Transition state stabilizer; via amide nitrogen" evidence="2">
    <location>
        <position position="975"/>
    </location>
</feature>
<dbReference type="EC" id="3.4.21.-"/>
<dbReference type="EMBL" id="Y08256">
    <property type="protein sequence ID" value="CAA69507.1"/>
    <property type="molecule type" value="Genomic_DNA"/>
</dbReference>
<dbReference type="EMBL" id="AE006641">
    <property type="protein sequence ID" value="AAK42276.1"/>
    <property type="molecule type" value="Genomic_DNA"/>
</dbReference>
<dbReference type="PIR" id="S73091">
    <property type="entry name" value="S73091"/>
</dbReference>
<dbReference type="SMR" id="P95871"/>
<dbReference type="STRING" id="273057.SSO2098"/>
<dbReference type="MEROPS" id="S41.005"/>
<dbReference type="PaxDb" id="273057-SSO2098"/>
<dbReference type="EnsemblBacteria" id="AAK42276">
    <property type="protein sequence ID" value="AAK42276"/>
    <property type="gene ID" value="SSO2098"/>
</dbReference>
<dbReference type="KEGG" id="sso:SSO2098"/>
<dbReference type="PATRIC" id="fig|273057.12.peg.2178"/>
<dbReference type="eggNOG" id="arCOG03384">
    <property type="taxonomic scope" value="Archaea"/>
</dbReference>
<dbReference type="HOGENOM" id="CLU_005503_1_0_2"/>
<dbReference type="InParanoid" id="P95871"/>
<dbReference type="PhylomeDB" id="P95871"/>
<dbReference type="Proteomes" id="UP000001974">
    <property type="component" value="Chromosome"/>
</dbReference>
<dbReference type="GO" id="GO:0005737">
    <property type="term" value="C:cytoplasm"/>
    <property type="evidence" value="ECO:0007669"/>
    <property type="project" value="UniProtKB-SubCell"/>
</dbReference>
<dbReference type="GO" id="GO:0008236">
    <property type="term" value="F:serine-type peptidase activity"/>
    <property type="evidence" value="ECO:0000250"/>
    <property type="project" value="UniProtKB"/>
</dbReference>
<dbReference type="GO" id="GO:0006508">
    <property type="term" value="P:proteolysis"/>
    <property type="evidence" value="ECO:0000250"/>
    <property type="project" value="UniProtKB"/>
</dbReference>
<dbReference type="CDD" id="cd10828">
    <property type="entry name" value="cpPDZ_Tricorn-protease"/>
    <property type="match status" value="1"/>
</dbReference>
<dbReference type="CDD" id="cd07562">
    <property type="entry name" value="Peptidase_S41_TRI"/>
    <property type="match status" value="1"/>
</dbReference>
<dbReference type="FunFam" id="2.120.10.60:FF:000001">
    <property type="entry name" value="Tricorn protease homolog"/>
    <property type="match status" value="1"/>
</dbReference>
<dbReference type="Gene3D" id="2.30.42.10">
    <property type="match status" value="1"/>
</dbReference>
<dbReference type="Gene3D" id="3.30.750.44">
    <property type="match status" value="1"/>
</dbReference>
<dbReference type="Gene3D" id="3.90.226.10">
    <property type="entry name" value="2-enoyl-CoA Hydratase, Chain A, domain 1"/>
    <property type="match status" value="1"/>
</dbReference>
<dbReference type="Gene3D" id="2.120.10.60">
    <property type="entry name" value="Tricorn protease N-terminal domain"/>
    <property type="match status" value="1"/>
</dbReference>
<dbReference type="Gene3D" id="2.130.10.10">
    <property type="entry name" value="YVTN repeat-like/Quinoprotein amine dehydrogenase"/>
    <property type="match status" value="1"/>
</dbReference>
<dbReference type="InterPro" id="IPR029045">
    <property type="entry name" value="ClpP/crotonase-like_dom_sf"/>
</dbReference>
<dbReference type="InterPro" id="IPR011659">
    <property type="entry name" value="PD40"/>
</dbReference>
<dbReference type="InterPro" id="IPR036034">
    <property type="entry name" value="PDZ_sf"/>
</dbReference>
<dbReference type="InterPro" id="IPR005151">
    <property type="entry name" value="Tail-specific_protease"/>
</dbReference>
<dbReference type="InterPro" id="IPR028204">
    <property type="entry name" value="Tricorn_C1"/>
</dbReference>
<dbReference type="InterPro" id="IPR029414">
    <property type="entry name" value="Tricorn_PDZ"/>
</dbReference>
<dbReference type="InterPro" id="IPR012393">
    <property type="entry name" value="Tricorn_protease"/>
</dbReference>
<dbReference type="InterPro" id="IPR015943">
    <property type="entry name" value="WD40/YVTN_repeat-like_dom_sf"/>
</dbReference>
<dbReference type="PANTHER" id="PTHR43253">
    <property type="entry name" value="TRICORN PROTEASE HOMOLOG 2-RELATED"/>
    <property type="match status" value="1"/>
</dbReference>
<dbReference type="PANTHER" id="PTHR43253:SF1">
    <property type="entry name" value="TRICORN PROTEASE HOMOLOG 2-RELATED"/>
    <property type="match status" value="1"/>
</dbReference>
<dbReference type="Pfam" id="PF07676">
    <property type="entry name" value="PD40"/>
    <property type="match status" value="1"/>
</dbReference>
<dbReference type="Pfam" id="PF14685">
    <property type="entry name" value="PDZ_Tricorn"/>
    <property type="match status" value="1"/>
</dbReference>
<dbReference type="Pfam" id="PF03572">
    <property type="entry name" value="Peptidase_S41"/>
    <property type="match status" value="1"/>
</dbReference>
<dbReference type="Pfam" id="PF14684">
    <property type="entry name" value="Tricorn_C1"/>
    <property type="match status" value="1"/>
</dbReference>
<dbReference type="PIRSF" id="PIRSF036421">
    <property type="entry name" value="Tricorn_protease"/>
    <property type="match status" value="1"/>
</dbReference>
<dbReference type="SMART" id="SM00245">
    <property type="entry name" value="TSPc"/>
    <property type="match status" value="1"/>
</dbReference>
<dbReference type="SUPFAM" id="SSF52096">
    <property type="entry name" value="ClpP/crotonase"/>
    <property type="match status" value="1"/>
</dbReference>
<dbReference type="SUPFAM" id="SSF50156">
    <property type="entry name" value="PDZ domain-like"/>
    <property type="match status" value="1"/>
</dbReference>
<dbReference type="SUPFAM" id="SSF69322">
    <property type="entry name" value="Tricorn protease domain 2"/>
    <property type="match status" value="1"/>
</dbReference>
<dbReference type="SUPFAM" id="SSF69304">
    <property type="entry name" value="Tricorn protease N-terminal domain"/>
    <property type="match status" value="1"/>
</dbReference>
<protein>
    <recommendedName>
        <fullName>Tricorn protease homolog</fullName>
        <ecNumber>3.4.21.-</ecNumber>
    </recommendedName>
</protein>